<evidence type="ECO:0000255" key="1">
    <source>
        <dbReference type="HAMAP-Rule" id="MF_00822"/>
    </source>
</evidence>
<evidence type="ECO:0000256" key="2">
    <source>
        <dbReference type="SAM" id="MobiDB-lite"/>
    </source>
</evidence>
<accession>Q1BYH3</accession>
<sequence length="204" mass="22042">MRTLDKRIAPNVKLAASLVARAPTLTLAYDARCKSRLAATLDTGEDVAVLLPRGTVLRDGDVLVADDGALVRIAAAPETVLLVRAADPLTLMRAAYHLGNRHTPVEIGDGYLKLEADPVLADMLRRLGTQVDETHAPFQPEAGAYGGGHKHGHDATFAEDYALAQQVFGEHHGHAHSHDHDHDHDHDHQHGPGCTHGHHGHDHH</sequence>
<proteinExistence type="inferred from homology"/>
<name>UREE_BURO1</name>
<keyword id="KW-0143">Chaperone</keyword>
<keyword id="KW-0963">Cytoplasm</keyword>
<keyword id="KW-0533">Nickel</keyword>
<keyword id="KW-0996">Nickel insertion</keyword>
<reference key="1">
    <citation type="submission" date="2006-05" db="EMBL/GenBank/DDBJ databases">
        <title>Complete sequence of chromosome 1 of Burkholderia cenocepacia AU 1054.</title>
        <authorList>
            <consortium name="US DOE Joint Genome Institute"/>
            <person name="Copeland A."/>
            <person name="Lucas S."/>
            <person name="Lapidus A."/>
            <person name="Barry K."/>
            <person name="Detter J.C."/>
            <person name="Glavina del Rio T."/>
            <person name="Hammon N."/>
            <person name="Israni S."/>
            <person name="Dalin E."/>
            <person name="Tice H."/>
            <person name="Pitluck S."/>
            <person name="Chain P."/>
            <person name="Malfatti S."/>
            <person name="Shin M."/>
            <person name="Vergez L."/>
            <person name="Schmutz J."/>
            <person name="Larimer F."/>
            <person name="Land M."/>
            <person name="Hauser L."/>
            <person name="Kyrpides N."/>
            <person name="Lykidis A."/>
            <person name="LiPuma J.J."/>
            <person name="Konstantinidis K."/>
            <person name="Tiedje J.M."/>
            <person name="Richardson P."/>
        </authorList>
    </citation>
    <scope>NUCLEOTIDE SEQUENCE [LARGE SCALE GENOMIC DNA]</scope>
    <source>
        <strain>AU 1054</strain>
    </source>
</reference>
<feature type="chain" id="PRO_1000083874" description="Urease accessory protein UreE">
    <location>
        <begin position="1"/>
        <end position="204"/>
    </location>
</feature>
<feature type="region of interest" description="Disordered" evidence="2">
    <location>
        <begin position="172"/>
        <end position="204"/>
    </location>
</feature>
<feature type="compositionally biased region" description="Basic and acidic residues" evidence="2">
    <location>
        <begin position="172"/>
        <end position="190"/>
    </location>
</feature>
<comment type="function">
    <text evidence="1">Involved in urease metallocenter assembly. Binds nickel. Probably functions as a nickel donor during metallocenter assembly.</text>
</comment>
<comment type="subcellular location">
    <subcellularLocation>
        <location evidence="1">Cytoplasm</location>
    </subcellularLocation>
</comment>
<comment type="similarity">
    <text evidence="1">Belongs to the UreE family.</text>
</comment>
<protein>
    <recommendedName>
        <fullName evidence="1">Urease accessory protein UreE</fullName>
    </recommendedName>
</protein>
<dbReference type="EMBL" id="CP000378">
    <property type="protein sequence ID" value="ABF75332.1"/>
    <property type="molecule type" value="Genomic_DNA"/>
</dbReference>
<dbReference type="SMR" id="Q1BYH3"/>
<dbReference type="HOGENOM" id="CLU_093757_0_0_4"/>
<dbReference type="GO" id="GO:0005737">
    <property type="term" value="C:cytoplasm"/>
    <property type="evidence" value="ECO:0007669"/>
    <property type="project" value="UniProtKB-SubCell"/>
</dbReference>
<dbReference type="GO" id="GO:0016151">
    <property type="term" value="F:nickel cation binding"/>
    <property type="evidence" value="ECO:0007669"/>
    <property type="project" value="UniProtKB-UniRule"/>
</dbReference>
<dbReference type="GO" id="GO:0051082">
    <property type="term" value="F:unfolded protein binding"/>
    <property type="evidence" value="ECO:0007669"/>
    <property type="project" value="UniProtKB-UniRule"/>
</dbReference>
<dbReference type="GO" id="GO:0006457">
    <property type="term" value="P:protein folding"/>
    <property type="evidence" value="ECO:0007669"/>
    <property type="project" value="InterPro"/>
</dbReference>
<dbReference type="GO" id="GO:0065003">
    <property type="term" value="P:protein-containing complex assembly"/>
    <property type="evidence" value="ECO:0007669"/>
    <property type="project" value="InterPro"/>
</dbReference>
<dbReference type="GO" id="GO:0019627">
    <property type="term" value="P:urea metabolic process"/>
    <property type="evidence" value="ECO:0007669"/>
    <property type="project" value="InterPro"/>
</dbReference>
<dbReference type="CDD" id="cd00571">
    <property type="entry name" value="UreE"/>
    <property type="match status" value="1"/>
</dbReference>
<dbReference type="Gene3D" id="2.60.260.20">
    <property type="entry name" value="Urease metallochaperone UreE, N-terminal domain"/>
    <property type="match status" value="1"/>
</dbReference>
<dbReference type="Gene3D" id="3.30.70.790">
    <property type="entry name" value="UreE, C-terminal domain"/>
    <property type="match status" value="1"/>
</dbReference>
<dbReference type="HAMAP" id="MF_00822">
    <property type="entry name" value="UreE"/>
    <property type="match status" value="1"/>
</dbReference>
<dbReference type="InterPro" id="IPR012406">
    <property type="entry name" value="UreE"/>
</dbReference>
<dbReference type="InterPro" id="IPR007864">
    <property type="entry name" value="UreE_C_dom"/>
</dbReference>
<dbReference type="InterPro" id="IPR004029">
    <property type="entry name" value="UreE_N"/>
</dbReference>
<dbReference type="InterPro" id="IPR036118">
    <property type="entry name" value="UreE_N_sf"/>
</dbReference>
<dbReference type="NCBIfam" id="NF009751">
    <property type="entry name" value="PRK13261.1-1"/>
    <property type="match status" value="1"/>
</dbReference>
<dbReference type="NCBIfam" id="NF009762">
    <property type="entry name" value="PRK13263.1"/>
    <property type="match status" value="1"/>
</dbReference>
<dbReference type="Pfam" id="PF05194">
    <property type="entry name" value="UreE_C"/>
    <property type="match status" value="1"/>
</dbReference>
<dbReference type="Pfam" id="PF02814">
    <property type="entry name" value="UreE_N"/>
    <property type="match status" value="1"/>
</dbReference>
<dbReference type="SMART" id="SM00988">
    <property type="entry name" value="UreE_N"/>
    <property type="match status" value="1"/>
</dbReference>
<dbReference type="SUPFAM" id="SSF69737">
    <property type="entry name" value="Urease metallochaperone UreE, C-terminal domain"/>
    <property type="match status" value="1"/>
</dbReference>
<dbReference type="SUPFAM" id="SSF69287">
    <property type="entry name" value="Urease metallochaperone UreE, N-terminal domain"/>
    <property type="match status" value="1"/>
</dbReference>
<gene>
    <name evidence="1" type="primary">ureE</name>
    <name type="ordered locus">Bcen_0420</name>
</gene>
<organism>
    <name type="scientific">Burkholderia orbicola (strain AU 1054)</name>
    <dbReference type="NCBI Taxonomy" id="331271"/>
    <lineage>
        <taxon>Bacteria</taxon>
        <taxon>Pseudomonadati</taxon>
        <taxon>Pseudomonadota</taxon>
        <taxon>Betaproteobacteria</taxon>
        <taxon>Burkholderiales</taxon>
        <taxon>Burkholderiaceae</taxon>
        <taxon>Burkholderia</taxon>
        <taxon>Burkholderia cepacia complex</taxon>
        <taxon>Burkholderia orbicola</taxon>
    </lineage>
</organism>